<proteinExistence type="evidence at protein level"/>
<reference evidence="4 6" key="1">
    <citation type="journal article" date="2014" name="Proc. Natl. Acad. Sci. U.S.A.">
        <title>Single-residue insertion switches the quaternary structure and exciton states of cryptophyte light-harvesting proteins.</title>
        <authorList>
            <person name="Harrop S.J."/>
            <person name="Wilk K.E."/>
            <person name="Dinshaw R."/>
            <person name="Collini E."/>
            <person name="Mirkovic T."/>
            <person name="Teng C.Y."/>
            <person name="Oblinsky D.G."/>
            <person name="Green B.R."/>
            <person name="Hoef-Emden K."/>
            <person name="Hiller R.G."/>
            <person name="Scholes G.D."/>
            <person name="Curmi P.M."/>
        </authorList>
    </citation>
    <scope>NUCLEOTIDE SEQUENCE [MRNA]</scope>
    <scope>X-RAY CRYSTALLOGRAPHY (1.80 ANGSTROMS) OF 48-109 IN COMPLEX WITH PHYCOERYTHROBILIN</scope>
    <scope>SUBUNIT</scope>
    <source>
        <strain evidence="4">CCMP644</strain>
    </source>
</reference>
<reference evidence="5" key="2">
    <citation type="submission" date="2021-01" db="EMBL/GenBank/DDBJ databases">
        <authorList>
            <person name="Corre E."/>
            <person name="Pelletier E."/>
            <person name="Niang G."/>
            <person name="Scheremetjew M."/>
            <person name="Finn R."/>
            <person name="Kale V."/>
            <person name="Holt S."/>
            <person name="Cochrane G."/>
            <person name="Meng A."/>
            <person name="Brown T."/>
            <person name="Cohen L."/>
        </authorList>
    </citation>
    <scope>NUCLEOTIDE SEQUENCE [MRNA]</scope>
    <source>
        <strain evidence="5">CCMP441</strain>
    </source>
</reference>
<sequence>MYTKIALLGLVGSAAAFNAPMMTVRRDAIATGAAAAVVAPMLRPAGAAMKKDSKAPCVEVFDERDGCKAAGTQKASGDDGFCVKVSMKAIKMNAAEATSVTKNYNTKLL</sequence>
<gene>
    <name evidence="5" type="ORF">HAND1043_LOCUS7931</name>
</gene>
<name>PHEA2_HEMAN</name>
<comment type="function">
    <text evidence="3">Light-harvesting photosynthetic tetrapyrrole chromophore-protein from the phycobiliprotein complex.</text>
</comment>
<comment type="subunit">
    <text evidence="1">Heterotetramer of 2 different alpha chains and 2 identical beta chains which form 2 alpha-beta heterodimers within the heterotetramer. The two alpha-beta heterodimers are rotated to an open configuration in contrast to the closed configuration found in other cryptophyte species due to the insertion of a single amino acid, Asp-65, in a conserved region of the alpha chain. In the open form, the central chromophores are not in physical contact but are separated by a water-filled channel.</text>
</comment>
<comment type="subcellular location">
    <subcellularLocation>
        <location evidence="3">Plastid</location>
        <location evidence="3">Chloroplast thylakoid membrane</location>
        <topology evidence="3">Peripheral membrane protein</topology>
        <orientation evidence="3">Lumenal side</orientation>
    </subcellularLocation>
</comment>
<comment type="PTM">
    <text evidence="1">Contains three phycoerythrobilin chromophores with binding mediated by both the alpha and beta subunits.</text>
</comment>
<comment type="miscellaneous">
    <text evidence="3">The light-harvesting system in Cryptophytes contains phycobiliprotein complexes. Unusually they are composed of either phycoerythrin (CPE) or phycocyanin (CPC) but never allophycocyanin (APC), with only one type of biliprotein being present in any one species. Unlike cyanobacteria or red algae these proteins are not arranged into higher-order phycobilisome complexes, and they are found in the thylakoid lumen.</text>
</comment>
<comment type="similarity">
    <text evidence="3">Belongs to the phycoerythrin family.</text>
</comment>
<comment type="sequence caution" evidence="3">
    <conflict type="erroneous initiation"/>
    <text>Extended N-terminus.</text>
</comment>
<dbReference type="EMBL" id="KF314692">
    <property type="protein sequence ID" value="AGY96989.1"/>
    <property type="molecule type" value="mRNA"/>
</dbReference>
<dbReference type="EMBL" id="HBFK01013226">
    <property type="protein sequence ID" value="CAD8741436.1"/>
    <property type="status" value="ALT_INIT"/>
    <property type="molecule type" value="Transcribed_RNA"/>
</dbReference>
<dbReference type="EMBL" id="HBFK01013237">
    <property type="protein sequence ID" value="CAD8741439.1"/>
    <property type="molecule type" value="Transcribed_RNA"/>
</dbReference>
<dbReference type="PDB" id="4LMX">
    <property type="method" value="X-ray"/>
    <property type="resolution" value="1.80 A"/>
    <property type="chains" value="A/E/G/I/K=48-109"/>
</dbReference>
<dbReference type="PDB" id="8EL3">
    <property type="method" value="X-ray"/>
    <property type="resolution" value="1.57 A"/>
    <property type="chains" value="C/E/I/L=48-109"/>
</dbReference>
<dbReference type="PDB" id="8EL4">
    <property type="method" value="X-ray"/>
    <property type="resolution" value="1.73 A"/>
    <property type="chains" value="C/E=48-109"/>
</dbReference>
<dbReference type="PDB" id="8EL5">
    <property type="method" value="X-ray"/>
    <property type="resolution" value="1.67 A"/>
    <property type="chains" value="C/E/I/L=48-109"/>
</dbReference>
<dbReference type="PDB" id="8EL6">
    <property type="method" value="X-ray"/>
    <property type="resolution" value="1.95 A"/>
    <property type="chains" value="C/E=48-109"/>
</dbReference>
<dbReference type="PDBsum" id="4LMX"/>
<dbReference type="PDBsum" id="8EL3"/>
<dbReference type="PDBsum" id="8EL4"/>
<dbReference type="PDBsum" id="8EL5"/>
<dbReference type="PDBsum" id="8EL6"/>
<dbReference type="SMR" id="U5TBJ3"/>
<dbReference type="GO" id="GO:0009535">
    <property type="term" value="C:chloroplast thylakoid membrane"/>
    <property type="evidence" value="ECO:0007669"/>
    <property type="project" value="UniProtKB-SubCell"/>
</dbReference>
<dbReference type="GO" id="GO:0030089">
    <property type="term" value="C:phycobilisome"/>
    <property type="evidence" value="ECO:0007669"/>
    <property type="project" value="InterPro"/>
</dbReference>
<dbReference type="GO" id="GO:0015979">
    <property type="term" value="P:photosynthesis"/>
    <property type="evidence" value="ECO:0007669"/>
    <property type="project" value="UniProtKB-KW"/>
</dbReference>
<dbReference type="Gene3D" id="3.90.510.10">
    <property type="entry name" value="Phycoerythrin alpha chain"/>
    <property type="match status" value="1"/>
</dbReference>
<dbReference type="InterPro" id="IPR011070">
    <property type="entry name" value="Globular_prot_asu/bsu"/>
</dbReference>
<dbReference type="InterPro" id="IPR037011">
    <property type="entry name" value="Phycoerythr-like_a_sf"/>
</dbReference>
<dbReference type="InterPro" id="IPR004228">
    <property type="entry name" value="Phycoerythr_a"/>
</dbReference>
<dbReference type="Pfam" id="PF02972">
    <property type="entry name" value="Phycoerythr_ab"/>
    <property type="match status" value="1"/>
</dbReference>
<dbReference type="SUPFAM" id="SSF56568">
    <property type="entry name" value="Non-globular alpha+beta subunits of globular proteins"/>
    <property type="match status" value="1"/>
</dbReference>
<organism evidence="4">
    <name type="scientific">Hemiselmis andersenii</name>
    <name type="common">Cryptophyte alga</name>
    <dbReference type="NCBI Taxonomy" id="464988"/>
    <lineage>
        <taxon>Eukaryota</taxon>
        <taxon>Cryptophyceae</taxon>
        <taxon>Cryptomonadales</taxon>
        <taxon>Hemiselmidaceae</taxon>
        <taxon>Hemiselmis</taxon>
    </lineage>
</organism>
<protein>
    <recommendedName>
        <fullName evidence="3">Phycoerythrin alpha-2 subunit</fullName>
    </recommendedName>
    <alternativeName>
        <fullName evidence="3">Phycoerythrin PE555 alpha-2 subunit</fullName>
        <shortName evidence="2">PE555A-2</shortName>
    </alternativeName>
</protein>
<geneLocation type="chloroplast" evidence="4"/>
<keyword id="KW-0002">3D-structure</keyword>
<keyword id="KW-0089">Bile pigment</keyword>
<keyword id="KW-0150">Chloroplast</keyword>
<keyword id="KW-0157">Chromophore</keyword>
<keyword id="KW-0249">Electron transport</keyword>
<keyword id="KW-0472">Membrane</keyword>
<keyword id="KW-0602">Photosynthesis</keyword>
<keyword id="KW-0934">Plastid</keyword>
<keyword id="KW-0793">Thylakoid</keyword>
<keyword id="KW-0813">Transport</keyword>
<feature type="chain" id="PRO_5029322543" description="Phycoerythrin alpha-2 subunit">
    <location>
        <begin position="1"/>
        <end position="109"/>
    </location>
</feature>
<feature type="binding site" evidence="1 6">
    <location>
        <position position="52"/>
    </location>
    <ligand>
        <name>(2R,3E)-phycoerythrobilin</name>
        <dbReference type="ChEBI" id="CHEBI:85276"/>
        <label>1</label>
        <note>ligand shared with beta subunit</note>
    </ligand>
</feature>
<feature type="binding site" evidence="1 6">
    <location>
        <position position="53"/>
    </location>
    <ligand>
        <name>(2R,3E)-phycoerythrobilin</name>
        <dbReference type="ChEBI" id="CHEBI:85276"/>
        <label>1</label>
        <note>ligand shared with beta subunit</note>
    </ligand>
</feature>
<feature type="binding site" evidence="1 6">
    <location>
        <position position="63"/>
    </location>
    <ligand>
        <name>(2R,3E)-phycoerythrobilin</name>
        <dbReference type="ChEBI" id="CHEBI:85276"/>
        <label>2</label>
        <note>ligand shared with beta subunit</note>
    </ligand>
</feature>
<feature type="binding site" evidence="1 6">
    <location>
        <position position="64"/>
    </location>
    <ligand>
        <name>(2R,3E)-phycoerythrobilin</name>
        <dbReference type="ChEBI" id="CHEBI:85276"/>
        <label>3</label>
        <note>ligand shared with beta subunit</note>
    </ligand>
</feature>
<feature type="binding site" description="covalent" evidence="1 6">
    <location>
        <position position="67"/>
    </location>
    <ligand>
        <name>(2R,3E)-phycoerythrobilin</name>
        <dbReference type="ChEBI" id="CHEBI:85276"/>
        <label>2</label>
        <note>ligand shared with beta subunit</note>
    </ligand>
</feature>
<feature type="binding site" evidence="1 6">
    <location>
        <position position="72"/>
    </location>
    <ligand>
        <name>(2R,3E)-phycoerythrobilin</name>
        <dbReference type="ChEBI" id="CHEBI:85276"/>
        <label>2</label>
        <note>ligand shared with beta subunit</note>
    </ligand>
</feature>
<feature type="binding site" evidence="1 6">
    <location>
        <position position="74"/>
    </location>
    <ligand>
        <name>(2R,3E)-phycoerythrobilin</name>
        <dbReference type="ChEBI" id="CHEBI:85276"/>
        <label>2</label>
        <note>ligand shared with beta subunit</note>
    </ligand>
</feature>
<feature type="binding site" evidence="1 6">
    <location>
        <position position="75"/>
    </location>
    <ligand>
        <name>(2R,3E)-phycoerythrobilin</name>
        <dbReference type="ChEBI" id="CHEBI:85276"/>
        <label>2</label>
        <note>ligand shared with beta subunit</note>
    </ligand>
</feature>
<feature type="binding site" evidence="1 6">
    <location>
        <position position="84"/>
    </location>
    <ligand>
        <name>(2R,3E)-phycoerythrobilin</name>
        <dbReference type="ChEBI" id="CHEBI:85276"/>
        <label>2</label>
        <note>ligand shared with beta subunit</note>
    </ligand>
</feature>
<feature type="strand" evidence="7">
    <location>
        <begin position="49"/>
        <end position="55"/>
    </location>
</feature>
<feature type="strand" evidence="7">
    <location>
        <begin position="57"/>
        <end position="95"/>
    </location>
</feature>
<feature type="helix" evidence="7">
    <location>
        <begin position="96"/>
        <end position="103"/>
    </location>
</feature>
<feature type="strand" evidence="7">
    <location>
        <begin position="104"/>
        <end position="108"/>
    </location>
</feature>
<evidence type="ECO:0000269" key="1">
    <source>
    </source>
</evidence>
<evidence type="ECO:0000303" key="2">
    <source>
    </source>
</evidence>
<evidence type="ECO:0000305" key="3"/>
<evidence type="ECO:0000312" key="4">
    <source>
        <dbReference type="EMBL" id="AGY96989.1"/>
    </source>
</evidence>
<evidence type="ECO:0000312" key="5">
    <source>
        <dbReference type="EMBL" id="CAD8741439.1"/>
    </source>
</evidence>
<evidence type="ECO:0007744" key="6">
    <source>
        <dbReference type="PDB" id="4LMX"/>
    </source>
</evidence>
<evidence type="ECO:0007829" key="7">
    <source>
        <dbReference type="PDB" id="8EL3"/>
    </source>
</evidence>
<accession>U5TBJ3</accession>
<accession>A0A7S0XSP5</accession>